<organism>
    <name type="scientific">Aspergillus fumigatus (strain CBS 144.89 / FGSC A1163 / CEA10)</name>
    <name type="common">Neosartorya fumigata</name>
    <dbReference type="NCBI Taxonomy" id="451804"/>
    <lineage>
        <taxon>Eukaryota</taxon>
        <taxon>Fungi</taxon>
        <taxon>Dikarya</taxon>
        <taxon>Ascomycota</taxon>
        <taxon>Pezizomycotina</taxon>
        <taxon>Eurotiomycetes</taxon>
        <taxon>Eurotiomycetidae</taxon>
        <taxon>Eurotiales</taxon>
        <taxon>Aspergillaceae</taxon>
        <taxon>Aspergillus</taxon>
        <taxon>Aspergillus subgen. Fumigati</taxon>
    </lineage>
</organism>
<evidence type="ECO:0000255" key="1"/>
<evidence type="ECO:0000269" key="2">
    <source>
    </source>
</evidence>
<evidence type="ECO:0000269" key="3">
    <source>
    </source>
</evidence>
<evidence type="ECO:0000269" key="4">
    <source>
    </source>
</evidence>
<evidence type="ECO:0000303" key="5">
    <source>
    </source>
</evidence>
<evidence type="ECO:0000305" key="6"/>
<name>HASB_ASPFC</name>
<keyword id="KW-0472">Membrane</keyword>
<keyword id="KW-0812">Transmembrane</keyword>
<keyword id="KW-1133">Transmembrane helix</keyword>
<keyword id="KW-0843">Virulence</keyword>
<protein>
    <recommendedName>
        <fullName evidence="5">MFS-type transporter hasB</fullName>
    </recommendedName>
    <alternativeName>
        <fullName evidence="5">Hexadehydro-astechrome biosynthesis cluster protein B</fullName>
    </alternativeName>
</protein>
<dbReference type="EMBL" id="DS499596">
    <property type="protein sequence ID" value="EDP52463.1"/>
    <property type="molecule type" value="Genomic_DNA"/>
</dbReference>
<dbReference type="SMR" id="B0XWL0"/>
<dbReference type="EnsemblFungi" id="EDP52463">
    <property type="protein sequence ID" value="EDP52463"/>
    <property type="gene ID" value="AFUB_036290"/>
</dbReference>
<dbReference type="VEuPathDB" id="FungiDB:AFUB_036290"/>
<dbReference type="HOGENOM" id="CLU_001265_1_0_1"/>
<dbReference type="OrthoDB" id="28054at5052"/>
<dbReference type="PhylomeDB" id="B0XWL0"/>
<dbReference type="Proteomes" id="UP000001699">
    <property type="component" value="Unassembled WGS sequence"/>
</dbReference>
<dbReference type="GO" id="GO:0016020">
    <property type="term" value="C:membrane"/>
    <property type="evidence" value="ECO:0007669"/>
    <property type="project" value="UniProtKB-SubCell"/>
</dbReference>
<dbReference type="GO" id="GO:0022857">
    <property type="term" value="F:transmembrane transporter activity"/>
    <property type="evidence" value="ECO:0007669"/>
    <property type="project" value="InterPro"/>
</dbReference>
<dbReference type="FunFam" id="1.20.1250.20:FF:000958">
    <property type="entry name" value="MFS general substrate transporter"/>
    <property type="match status" value="1"/>
</dbReference>
<dbReference type="Gene3D" id="1.20.1250.20">
    <property type="entry name" value="MFS general substrate transporter like domains"/>
    <property type="match status" value="2"/>
</dbReference>
<dbReference type="InterPro" id="IPR011701">
    <property type="entry name" value="MFS"/>
</dbReference>
<dbReference type="InterPro" id="IPR036259">
    <property type="entry name" value="MFS_trans_sf"/>
</dbReference>
<dbReference type="InterPro" id="IPR050327">
    <property type="entry name" value="Proton-linked_MCT"/>
</dbReference>
<dbReference type="PANTHER" id="PTHR11360:SF234">
    <property type="entry name" value="MFS-TYPE TRANSPORTER DBAD-RELATED"/>
    <property type="match status" value="1"/>
</dbReference>
<dbReference type="PANTHER" id="PTHR11360">
    <property type="entry name" value="MONOCARBOXYLATE TRANSPORTER"/>
    <property type="match status" value="1"/>
</dbReference>
<dbReference type="Pfam" id="PF07690">
    <property type="entry name" value="MFS_1"/>
    <property type="match status" value="1"/>
</dbReference>
<dbReference type="SUPFAM" id="SSF103473">
    <property type="entry name" value="MFS general substrate transporter"/>
    <property type="match status" value="1"/>
</dbReference>
<proteinExistence type="evidence at transcript level"/>
<reference key="1">
    <citation type="journal article" date="2008" name="PLoS Genet.">
        <title>Genomic islands in the pathogenic filamentous fungus Aspergillus fumigatus.</title>
        <authorList>
            <person name="Fedorova N.D."/>
            <person name="Khaldi N."/>
            <person name="Joardar V.S."/>
            <person name="Maiti R."/>
            <person name="Amedeo P."/>
            <person name="Anderson M.J."/>
            <person name="Crabtree J."/>
            <person name="Silva J.C."/>
            <person name="Badger J.H."/>
            <person name="Albarraq A."/>
            <person name="Angiuoli S."/>
            <person name="Bussey H."/>
            <person name="Bowyer P."/>
            <person name="Cotty P.J."/>
            <person name="Dyer P.S."/>
            <person name="Egan A."/>
            <person name="Galens K."/>
            <person name="Fraser-Liggett C.M."/>
            <person name="Haas B.J."/>
            <person name="Inman J.M."/>
            <person name="Kent R."/>
            <person name="Lemieux S."/>
            <person name="Malavazi I."/>
            <person name="Orvis J."/>
            <person name="Roemer T."/>
            <person name="Ronning C.M."/>
            <person name="Sundaram J.P."/>
            <person name="Sutton G."/>
            <person name="Turner G."/>
            <person name="Venter J.C."/>
            <person name="White O.R."/>
            <person name="Whitty B.R."/>
            <person name="Youngman P."/>
            <person name="Wolfe K.H."/>
            <person name="Goldman G.H."/>
            <person name="Wortman J.R."/>
            <person name="Jiang B."/>
            <person name="Denning D.W."/>
            <person name="Nierman W.C."/>
        </authorList>
    </citation>
    <scope>NUCLEOTIDE SEQUENCE [LARGE SCALE GENOMIC DNA]</scope>
    <source>
        <strain>CBS 144.89 / FGSC A1163 / CEA10</strain>
    </source>
</reference>
<reference key="2">
    <citation type="journal article" date="2013" name="J. Am. Chem. Soc.">
        <title>A nonribosomal peptide synthetase-derived iron(III) complex from the pathogenic fungus Aspergillus fumigatus.</title>
        <authorList>
            <person name="Yin W.B."/>
            <person name="Baccile J.A."/>
            <person name="Bok J.W."/>
            <person name="Chen Y."/>
            <person name="Keller N.P."/>
            <person name="Schroeder F.C."/>
        </authorList>
    </citation>
    <scope>FUNCTION</scope>
    <scope>DISRUPTION PHENOTYPE</scope>
</reference>
<reference key="3">
    <citation type="journal article" date="2014" name="Front. Microbiol.">
        <title>Perturbations in small molecule synthesis uncovers an iron-responsive secondary metabolite network in Aspergillus fumigatus.</title>
        <authorList>
            <person name="Wiemann P."/>
            <person name="Lechner B.E."/>
            <person name="Baccile J.A."/>
            <person name="Velk T.A."/>
            <person name="Yin W.B."/>
            <person name="Bok J.W."/>
            <person name="Pakala S."/>
            <person name="Losada L."/>
            <person name="Nierman W.C."/>
            <person name="Schroeder F.C."/>
            <person name="Haas H."/>
            <person name="Keller N.P."/>
        </authorList>
    </citation>
    <scope>INDUCTION</scope>
</reference>
<reference key="4">
    <citation type="journal article" date="2022" name="J. Fungi">
        <title>Stress responses elicited by glucose withdrawal in Aspergillus fumigatus.</title>
        <authorList>
            <person name="Emri T."/>
            <person name="Antal K."/>
            <person name="Gila B."/>
            <person name="Jonas A.P."/>
            <person name="Pocsi I."/>
        </authorList>
    </citation>
    <scope>INDUCTION</scope>
</reference>
<comment type="function">
    <text evidence="2">MFS-type transporter; part of the gene cluster that mediates the biosynthesis of hexadehydro-astechrome (HAS), a tryptophan-derived iron(III)-complex that acts as a virulence factor in infected mice (PubMed:23360537). Required for the production of HAS (PubMed:23360537).</text>
</comment>
<comment type="subcellular location">
    <subcellularLocation>
        <location evidence="1">Membrane</location>
        <topology evidence="1">Multi-pass membrane protein</topology>
    </subcellularLocation>
</comment>
<comment type="induction">
    <text evidence="3 4">The expression of the hexadehydro-astechrome cluster is induced by glucose (PubMed:36422047). Expression is controlled by ambiant iron conditions in a hapX- and steA-dependent manner (PubMed:25386169).</text>
</comment>
<comment type="disruption phenotype">
    <text evidence="2">Leads to complete abolishment of hexadehydro-astechrome production.</text>
</comment>
<comment type="similarity">
    <text evidence="6">Belongs to the major facilitator superfamily. Monocarboxylate porter (TC 2.A.1.13) family.</text>
</comment>
<feature type="chain" id="PRO_0000461226" description="MFS-type transporter hasB">
    <location>
        <begin position="1"/>
        <end position="449"/>
    </location>
</feature>
<feature type="transmembrane region" description="Helical" evidence="1">
    <location>
        <begin position="44"/>
        <end position="64"/>
    </location>
</feature>
<feature type="transmembrane region" description="Helical" evidence="1">
    <location>
        <begin position="80"/>
        <end position="100"/>
    </location>
</feature>
<feature type="transmembrane region" description="Helical" evidence="1">
    <location>
        <begin position="112"/>
        <end position="132"/>
    </location>
</feature>
<feature type="transmembrane region" description="Helical" evidence="1">
    <location>
        <begin position="135"/>
        <end position="155"/>
    </location>
</feature>
<feature type="transmembrane region" description="Helical" evidence="1">
    <location>
        <begin position="168"/>
        <end position="188"/>
    </location>
</feature>
<feature type="transmembrane region" description="Helical" evidence="1">
    <location>
        <begin position="195"/>
        <end position="215"/>
    </location>
</feature>
<feature type="transmembrane region" description="Helical" evidence="1">
    <location>
        <begin position="255"/>
        <end position="275"/>
    </location>
</feature>
<feature type="transmembrane region" description="Helical" evidence="1">
    <location>
        <begin position="296"/>
        <end position="316"/>
    </location>
</feature>
<feature type="transmembrane region" description="Helical" evidence="1">
    <location>
        <begin position="322"/>
        <end position="342"/>
    </location>
</feature>
<feature type="transmembrane region" description="Helical" evidence="1">
    <location>
        <begin position="346"/>
        <end position="366"/>
    </location>
</feature>
<feature type="transmembrane region" description="Helical" evidence="1">
    <location>
        <begin position="387"/>
        <end position="407"/>
    </location>
</feature>
<feature type="transmembrane region" description="Helical" evidence="1">
    <location>
        <begin position="415"/>
        <end position="435"/>
    </location>
</feature>
<sequence>MSEEAPKHEAPSVISPIENEEKGLAPKPLERVPPNGGAKAWACVAGSFLLQFCSFGYVNACGIFQLYYQETMLKDQTSSALAWITTLQIFLLFMFGPAVGKMIDVYGCRRTLPPFSIGAVFSVCMLSLCTKYWQVMLAQGVAFGLAAAGLSLPAMATATQWFSTKKGLAVGIVSAGSSLGGVIYPCMLPRLIEQVGFASAVRWTALMQGILLFIANLLCSSPYPPLGRASKEASAEKDATEPTPRRSGLRGFKSLPWGFFVLGCFFTMWGLFAPLNYLPEMAALHGYQSFARYTLAIANAGSLVGRIVPGWVSDIIGQFNTMCIVTSLSGVLVLAFWLPLEFHTSLAGIIVFALLFGFVSGGFVSLGPPCVVSLAEDRVDEIGVKLGGFCLAIALGALTGLPIEGAIKDREGNKFTGLMCFAGATMILGGVCTGTARVFKGGPRLMKKV</sequence>
<accession>B0XWL0</accession>
<gene>
    <name evidence="5" type="primary">hasB</name>
    <name type="ORF">AFUB_036290</name>
</gene>